<proteinExistence type="inferred from homology"/>
<protein>
    <recommendedName>
        <fullName evidence="1">UPF0370 protein YpfN</fullName>
    </recommendedName>
</protein>
<comment type="subcellular location">
    <subcellularLocation>
        <location evidence="1">Cell membrane</location>
        <topology evidence="1">Single-pass membrane protein</topology>
    </subcellularLocation>
</comment>
<comment type="similarity">
    <text evidence="1">Belongs to the UPF0370 family.</text>
</comment>
<reference key="1">
    <citation type="journal article" date="2009" name="PLoS Genet.">
        <title>Organised genome dynamics in the Escherichia coli species results in highly diverse adaptive paths.</title>
        <authorList>
            <person name="Touchon M."/>
            <person name="Hoede C."/>
            <person name="Tenaillon O."/>
            <person name="Barbe V."/>
            <person name="Baeriswyl S."/>
            <person name="Bidet P."/>
            <person name="Bingen E."/>
            <person name="Bonacorsi S."/>
            <person name="Bouchier C."/>
            <person name="Bouvet O."/>
            <person name="Calteau A."/>
            <person name="Chiapello H."/>
            <person name="Clermont O."/>
            <person name="Cruveiller S."/>
            <person name="Danchin A."/>
            <person name="Diard M."/>
            <person name="Dossat C."/>
            <person name="Karoui M.E."/>
            <person name="Frapy E."/>
            <person name="Garry L."/>
            <person name="Ghigo J.M."/>
            <person name="Gilles A.M."/>
            <person name="Johnson J."/>
            <person name="Le Bouguenec C."/>
            <person name="Lescat M."/>
            <person name="Mangenot S."/>
            <person name="Martinez-Jehanne V."/>
            <person name="Matic I."/>
            <person name="Nassif X."/>
            <person name="Oztas S."/>
            <person name="Petit M.A."/>
            <person name="Pichon C."/>
            <person name="Rouy Z."/>
            <person name="Ruf C.S."/>
            <person name="Schneider D."/>
            <person name="Tourret J."/>
            <person name="Vacherie B."/>
            <person name="Vallenet D."/>
            <person name="Medigue C."/>
            <person name="Rocha E.P.C."/>
            <person name="Denamur E."/>
        </authorList>
    </citation>
    <scope>NUCLEOTIDE SEQUENCE [LARGE SCALE GENOMIC DNA]</scope>
    <source>
        <strain>IAI1</strain>
    </source>
</reference>
<evidence type="ECO:0000255" key="1">
    <source>
        <dbReference type="HAMAP-Rule" id="MF_01566"/>
    </source>
</evidence>
<evidence type="ECO:0000256" key="2">
    <source>
        <dbReference type="SAM" id="MobiDB-lite"/>
    </source>
</evidence>
<sequence length="66" mass="8071">MDWLAKYWWILVIVFLVGVLLNVIKDLKRVDHKKFLANKPELPPHRDFNDKWDDDDDWPKKDQPKK</sequence>
<organism>
    <name type="scientific">Escherichia coli O8 (strain IAI1)</name>
    <dbReference type="NCBI Taxonomy" id="585034"/>
    <lineage>
        <taxon>Bacteria</taxon>
        <taxon>Pseudomonadati</taxon>
        <taxon>Pseudomonadota</taxon>
        <taxon>Gammaproteobacteria</taxon>
        <taxon>Enterobacterales</taxon>
        <taxon>Enterobacteriaceae</taxon>
        <taxon>Escherichia</taxon>
    </lineage>
</organism>
<keyword id="KW-1003">Cell membrane</keyword>
<keyword id="KW-0472">Membrane</keyword>
<keyword id="KW-0812">Transmembrane</keyword>
<keyword id="KW-1133">Transmembrane helix</keyword>
<gene>
    <name evidence="1" type="primary">ypfN</name>
    <name type="ordered locus">ECIAI1_2521</name>
</gene>
<accession>B7M7H3</accession>
<feature type="chain" id="PRO_1000199725" description="UPF0370 protein YpfN">
    <location>
        <begin position="1"/>
        <end position="66"/>
    </location>
</feature>
<feature type="transmembrane region" description="Helical" evidence="1">
    <location>
        <begin position="4"/>
        <end position="24"/>
    </location>
</feature>
<feature type="region of interest" description="Disordered" evidence="2">
    <location>
        <begin position="39"/>
        <end position="66"/>
    </location>
</feature>
<feature type="compositionally biased region" description="Basic and acidic residues" evidence="2">
    <location>
        <begin position="42"/>
        <end position="51"/>
    </location>
</feature>
<dbReference type="EMBL" id="CU928160">
    <property type="protein sequence ID" value="CAQ99361.1"/>
    <property type="molecule type" value="Genomic_DNA"/>
</dbReference>
<dbReference type="RefSeq" id="WP_000383836.1">
    <property type="nucleotide sequence ID" value="NC_011741.1"/>
</dbReference>
<dbReference type="SMR" id="B7M7H3"/>
<dbReference type="KEGG" id="ecr:ECIAI1_2521"/>
<dbReference type="HOGENOM" id="CLU_198936_0_0_6"/>
<dbReference type="GO" id="GO:0005886">
    <property type="term" value="C:plasma membrane"/>
    <property type="evidence" value="ECO:0007669"/>
    <property type="project" value="UniProtKB-SubCell"/>
</dbReference>
<dbReference type="HAMAP" id="MF_01566">
    <property type="entry name" value="UPF0370"/>
    <property type="match status" value="1"/>
</dbReference>
<dbReference type="InterPro" id="IPR020910">
    <property type="entry name" value="UPF0370"/>
</dbReference>
<dbReference type="NCBIfam" id="NF010185">
    <property type="entry name" value="PRK13664.1"/>
    <property type="match status" value="1"/>
</dbReference>
<dbReference type="Pfam" id="PF13980">
    <property type="entry name" value="UPF0370"/>
    <property type="match status" value="1"/>
</dbReference>
<name>YPFN_ECO8A</name>